<name>OTU7B_HUMAN</name>
<protein>
    <recommendedName>
        <fullName>OTU domain-containing protein 7B</fullName>
        <ecNumber evidence="8 9 14 15 16 17">3.4.19.12</ecNumber>
    </recommendedName>
    <alternativeName>
        <fullName evidence="19">Cellular zinc finger anti-NF-kappa-B protein</fullName>
        <shortName evidence="19 21 22">Cezanne</shortName>
    </alternativeName>
    <alternativeName>
        <fullName>Zinc finger A20 domain-containing protein 1</fullName>
    </alternativeName>
    <alternativeName>
        <fullName evidence="23">Zinc finger protein Cezanne</fullName>
    </alternativeName>
</protein>
<gene>
    <name type="primary">OTUD7B</name>
    <name type="synonym">ZA20D1</name>
</gene>
<feature type="chain" id="PRO_0000188788" description="OTU domain-containing protein 7B">
    <location>
        <begin position="1"/>
        <end position="843"/>
    </location>
</feature>
<feature type="domain" description="OTU" evidence="4">
    <location>
        <begin position="183"/>
        <end position="365"/>
    </location>
</feature>
<feature type="zinc finger region" description="A20-type" evidence="5">
    <location>
        <begin position="796"/>
        <end position="831"/>
    </location>
</feature>
<feature type="region of interest" description="Disordered" evidence="6">
    <location>
        <begin position="50"/>
        <end position="88"/>
    </location>
</feature>
<feature type="region of interest" description="TRAF-binding">
    <location>
        <begin position="152"/>
        <end position="401"/>
    </location>
</feature>
<feature type="region of interest" description="Catalytic">
    <location>
        <begin position="167"/>
        <end position="440"/>
    </location>
</feature>
<feature type="region of interest" description="Regulatory loop" evidence="17">
    <location>
        <begin position="187"/>
        <end position="193"/>
    </location>
</feature>
<feature type="region of interest" description="Disordered" evidence="6">
    <location>
        <begin position="442"/>
        <end position="587"/>
    </location>
</feature>
<feature type="region of interest" description="Disordered" evidence="6">
    <location>
        <begin position="652"/>
        <end position="711"/>
    </location>
</feature>
<feature type="region of interest" description="Disordered" evidence="6">
    <location>
        <begin position="732"/>
        <end position="792"/>
    </location>
</feature>
<feature type="short sequence motif" description="Nuclear localization signal" evidence="3">
    <location>
        <begin position="483"/>
        <end position="498"/>
    </location>
</feature>
<feature type="compositionally biased region" description="Basic and acidic residues" evidence="6">
    <location>
        <begin position="65"/>
        <end position="77"/>
    </location>
</feature>
<feature type="compositionally biased region" description="Basic and acidic residues" evidence="6">
    <location>
        <begin position="456"/>
        <end position="471"/>
    </location>
</feature>
<feature type="compositionally biased region" description="Basic and acidic residues" evidence="6">
    <location>
        <begin position="488"/>
        <end position="500"/>
    </location>
</feature>
<feature type="compositionally biased region" description="Gly residues" evidence="6">
    <location>
        <begin position="531"/>
        <end position="543"/>
    </location>
</feature>
<feature type="compositionally biased region" description="Basic and acidic residues" evidence="6">
    <location>
        <begin position="665"/>
        <end position="675"/>
    </location>
</feature>
<feature type="active site" evidence="1">
    <location>
        <position position="191"/>
    </location>
</feature>
<feature type="active site" description="Nucleophile" evidence="8 9 14 17">
    <location>
        <position position="194"/>
    </location>
</feature>
<feature type="active site" description="Proton acceptor" evidence="17">
    <location>
        <position position="358"/>
    </location>
</feature>
<feature type="binding site" evidence="5">
    <location>
        <position position="802"/>
    </location>
    <ligand>
        <name>Zn(2+)</name>
        <dbReference type="ChEBI" id="CHEBI:29105"/>
    </ligand>
</feature>
<feature type="binding site" evidence="5">
    <location>
        <position position="807"/>
    </location>
    <ligand>
        <name>Zn(2+)</name>
        <dbReference type="ChEBI" id="CHEBI:29105"/>
    </ligand>
</feature>
<feature type="binding site" evidence="5">
    <location>
        <position position="819"/>
    </location>
    <ligand>
        <name>Zn(2+)</name>
        <dbReference type="ChEBI" id="CHEBI:29105"/>
    </ligand>
</feature>
<feature type="binding site" evidence="5">
    <location>
        <position position="822"/>
    </location>
    <ligand>
        <name>Zn(2+)</name>
        <dbReference type="ChEBI" id="CHEBI:29105"/>
    </ligand>
</feature>
<feature type="site" description="Stabilizes the conformation of the regulatory loop" evidence="17">
    <location>
        <position position="197"/>
    </location>
</feature>
<feature type="modified residue" description="Phosphoserine" evidence="27 28 29">
    <location>
        <position position="100"/>
    </location>
</feature>
<feature type="modified residue" description="Phosphoserine" evidence="2">
    <location>
        <position position="464"/>
    </location>
</feature>
<feature type="modified residue" description="Phosphoserine" evidence="29">
    <location>
        <position position="467"/>
    </location>
</feature>
<feature type="modified residue" description="Phosphoserine" evidence="2">
    <location>
        <position position="471"/>
    </location>
</feature>
<feature type="modified residue" description="Phosphothreonine" evidence="2">
    <location>
        <position position="729"/>
    </location>
</feature>
<feature type="splice variant" id="VSP_046015" description="In isoform 2." evidence="20">
    <location>
        <begin position="805"/>
        <end position="833"/>
    </location>
</feature>
<feature type="mutagenesis site" description="Reduces deubiquitinating activity." evidence="17">
    <original>LI</original>
    <variation>GG</variation>
    <location>
        <begin position="155"/>
        <end position="156"/>
    </location>
</feature>
<feature type="mutagenesis site" description="Reduces deubiquitinating activity with 'Lys-11'-linked ubiquitin chains; no effect on cleavage of 'Lys-48'-linked and 'Lys-63'-linked ubiquitin chains." evidence="17">
    <original>E</original>
    <variation>K</variation>
    <location>
        <position position="157"/>
    </location>
</feature>
<feature type="mutagenesis site" description="Loss of deubiquitinating activity due to stabilization of the autoinhibited conformation." evidence="17">
    <original>N</original>
    <variation>L</variation>
    <variation>M</variation>
    <location>
        <position position="193"/>
    </location>
</feature>
<feature type="mutagenesis site" description="Loss of deubiquitinating activity. Increased ability to interact with polyubiquitin." evidence="8 9 14 17">
    <original>C</original>
    <variation>A</variation>
    <location>
        <position position="194"/>
    </location>
</feature>
<feature type="mutagenesis site" description="Loss of deubiquitinating activity." evidence="8 9 14">
    <original>C</original>
    <variation>S</variation>
    <location>
        <position position="194"/>
    </location>
</feature>
<feature type="mutagenesis site" description="Loss of deubiquitinating activity; when associated with N-358." evidence="16">
    <original>C</original>
    <variation>S</variation>
    <location>
        <position position="194"/>
    </location>
</feature>
<feature type="mutagenesis site" description="Strongly reduces deubiquitinating activity." evidence="17">
    <original>H</original>
    <variation>A</variation>
    <variation>E</variation>
    <location>
        <position position="197"/>
    </location>
</feature>
<feature type="mutagenesis site" description="Reduces deubiquitinating activity." evidence="17">
    <original>H</original>
    <variation>D</variation>
    <variation>N</variation>
    <location>
        <position position="197"/>
    </location>
</feature>
<feature type="mutagenesis site" description="Reduces deubiquitinating activity." evidence="17">
    <original>D</original>
    <variation>A</variation>
    <location>
        <position position="210"/>
    </location>
</feature>
<feature type="mutagenesis site" description="Loss of deubiquitinating activity." evidence="17">
    <original>E</original>
    <variation>K</variation>
    <location>
        <position position="295"/>
    </location>
</feature>
<feature type="mutagenesis site" description="Loss of deubiquitinating activity." evidence="17">
    <original>H</original>
    <variation>A</variation>
    <location>
        <position position="358"/>
    </location>
</feature>
<feature type="mutagenesis site" description="Loss of deubiquitinating activity; when associated with S-194." evidence="16">
    <original>H</original>
    <variation>N</variation>
    <location>
        <position position="358"/>
    </location>
</feature>
<feature type="mutagenesis site" description="Does not affect interaction with EGFR." evidence="14">
    <original>F</original>
    <variation>A</variation>
    <location>
        <position position="809"/>
    </location>
</feature>
<feature type="mutagenesis site" description="Impairs interaction with EGFR." evidence="14">
    <original>Y</original>
    <variation>A</variation>
    <location>
        <position position="810"/>
    </location>
</feature>
<feature type="sequence conflict" description="In Ref. 5; AAH20622." evidence="23" ref="5">
    <original>K</original>
    <variation>E</variation>
    <location>
        <position position="243"/>
    </location>
</feature>
<feature type="sequence conflict" description="In Ref. 5; AAH20622." evidence="23" ref="5">
    <original>K</original>
    <variation>R</variation>
    <location>
        <position position="421"/>
    </location>
</feature>
<feature type="sequence conflict" description="In Ref. 2; BAH13129." evidence="23" ref="2">
    <original>G</original>
    <variation>S</variation>
    <location>
        <position position="791"/>
    </location>
</feature>
<feature type="strand" evidence="32">
    <location>
        <begin position="129"/>
        <end position="135"/>
    </location>
</feature>
<feature type="strand" evidence="32">
    <location>
        <begin position="141"/>
        <end position="143"/>
    </location>
</feature>
<feature type="helix" evidence="32">
    <location>
        <begin position="144"/>
        <end position="152"/>
    </location>
</feature>
<feature type="helix" evidence="32">
    <location>
        <begin position="158"/>
        <end position="166"/>
    </location>
</feature>
<feature type="strand" evidence="30">
    <location>
        <begin position="169"/>
        <end position="171"/>
    </location>
</feature>
<feature type="helix" evidence="32">
    <location>
        <begin position="173"/>
        <end position="176"/>
    </location>
</feature>
<feature type="strand" evidence="31">
    <location>
        <begin position="177"/>
        <end position="179"/>
    </location>
</feature>
<feature type="strand" evidence="32">
    <location>
        <begin position="183"/>
        <end position="186"/>
    </location>
</feature>
<feature type="strand" evidence="32">
    <location>
        <begin position="190"/>
        <end position="192"/>
    </location>
</feature>
<feature type="helix" evidence="32">
    <location>
        <begin position="194"/>
        <end position="199"/>
    </location>
</feature>
<feature type="helix" evidence="32">
    <location>
        <begin position="200"/>
        <end position="203"/>
    </location>
</feature>
<feature type="turn" evidence="31">
    <location>
        <begin position="206"/>
        <end position="208"/>
    </location>
</feature>
<feature type="helix" evidence="32">
    <location>
        <begin position="209"/>
        <end position="222"/>
    </location>
</feature>
<feature type="helix" evidence="32">
    <location>
        <begin position="227"/>
        <end position="243"/>
    </location>
</feature>
<feature type="turn" evidence="32">
    <location>
        <begin position="244"/>
        <end position="246"/>
    </location>
</feature>
<feature type="helix" evidence="32">
    <location>
        <begin position="251"/>
        <end position="266"/>
    </location>
</feature>
<feature type="helix" evidence="32">
    <location>
        <begin position="296"/>
        <end position="306"/>
    </location>
</feature>
<feature type="strand" evidence="32">
    <location>
        <begin position="310"/>
        <end position="313"/>
    </location>
</feature>
<feature type="strand" evidence="32">
    <location>
        <begin position="316"/>
        <end position="319"/>
    </location>
</feature>
<feature type="strand" evidence="32">
    <location>
        <begin position="325"/>
        <end position="328"/>
    </location>
</feature>
<feature type="strand" evidence="32">
    <location>
        <begin position="333"/>
        <end position="335"/>
    </location>
</feature>
<feature type="helix" evidence="32">
    <location>
        <begin position="342"/>
        <end position="344"/>
    </location>
</feature>
<feature type="strand" evidence="32">
    <location>
        <begin position="350"/>
        <end position="355"/>
    </location>
</feature>
<feature type="strand" evidence="32">
    <location>
        <begin position="358"/>
        <end position="364"/>
    </location>
</feature>
<feature type="helix" evidence="32">
    <location>
        <begin position="365"/>
        <end position="368"/>
    </location>
</feature>
<feature type="strand" evidence="32">
    <location>
        <begin position="375"/>
        <end position="380"/>
    </location>
</feature>
<feature type="helix" evidence="32">
    <location>
        <begin position="395"/>
        <end position="397"/>
    </location>
</feature>
<feature type="helix" evidence="31">
    <location>
        <begin position="401"/>
        <end position="406"/>
    </location>
</feature>
<feature type="helix" evidence="32">
    <location>
        <begin position="412"/>
        <end position="428"/>
    </location>
</feature>
<feature type="strand" evidence="32">
    <location>
        <begin position="432"/>
        <end position="435"/>
    </location>
</feature>
<sequence length="843" mass="92526">MTLDMDAVLSDFVRSTGAEPGLARDLLEGKNWDVNAALSDFEQLRQVHAGNLPPSFSEGSGGSRTPEKGFSDREPTRPPRPILQRQDDIVQEKRLSRGISHASSSIVSLARSHVSSNGGGGGSNEHPLEMPICAFQLPDLTVYNEDFRSFIERDLIEQSMLVALEQAGRLNWWVSVDPTSQRLLPLATTGDGNCLLHAASLGMWGFHDRDLMLRKALYALMEKGVEKEALKRRWRWQQTQQNKESGLVYTEDEWQKEWNELIKLASSEPRMHLGTNGANCGGVESSEEPVYESLEEFHVFVLAHVLRRPIVVVADTMLRDSGGEAFAPIPFGGIYLPLEVPASQCHRSPLVLAYDQAHFSALVSMEQKENTKEQAVIPLTDSEYKLLPLHFAVDPGKGWEWGKDDSDNVRLASVILSLEVKLHLLHSYMNVKWIPLSSDAQAPLAQPESPTASAGDEPRSTPESGDSDKESVGSSSTSNEGGRRKEKSKRDREKDKKRADSVANKLGSFGKTLGSKLKKNMGGLMHSKGSKPGGVGTGLGGSSGTETLEKKKKNSLKSWKGGKEEAAGDGPVSEKPPAESVGNGGSKYSQEVMQSLSILRTAMQGEGKFIFVGTLKMGHRHQYQEEMIQRYLSDAEERFLAEQKQKEAERKIMNGGIGGGPPPAKKPEPDAREEQPTGPPAESRAMAFSTGYPGDFTIPRPSGGGVHCQEPRRQLAGGPCVGGLPPYATFPRQCPPGRPYPHQDSIPSLEPGSHSKDGLHRGALLPPPYRVADSYSNGYREPPEPDGWAGGLRGLPPTQTKCKQPNCSFYGHPETNNFCSCCYREELRRREREPDGELLVHRF</sequence>
<keyword id="KW-0002">3D-structure</keyword>
<keyword id="KW-1064">Adaptive immunity</keyword>
<keyword id="KW-0025">Alternative splicing</keyword>
<keyword id="KW-0963">Cytoplasm</keyword>
<keyword id="KW-0378">Hydrolase</keyword>
<keyword id="KW-0391">Immunity</keyword>
<keyword id="KW-0479">Metal-binding</keyword>
<keyword id="KW-0539">Nucleus</keyword>
<keyword id="KW-0597">Phosphoprotein</keyword>
<keyword id="KW-0645">Protease</keyword>
<keyword id="KW-1267">Proteomics identification</keyword>
<keyword id="KW-1185">Reference proteome</keyword>
<keyword id="KW-0788">Thiol protease</keyword>
<keyword id="KW-0833">Ubl conjugation pathway</keyword>
<keyword id="KW-0862">Zinc</keyword>
<keyword id="KW-0863">Zinc-finger</keyword>
<dbReference type="EC" id="3.4.19.12" evidence="8 9 14 15 16 17"/>
<dbReference type="EMBL" id="AJ293573">
    <property type="protein sequence ID" value="CAB97494.1"/>
    <property type="status" value="ALT_INIT"/>
    <property type="molecule type" value="mRNA"/>
</dbReference>
<dbReference type="EMBL" id="AK299790">
    <property type="protein sequence ID" value="BAH13129.1"/>
    <property type="molecule type" value="mRNA"/>
</dbReference>
<dbReference type="EMBL" id="AL590487">
    <property type="protein sequence ID" value="CAI12651.1"/>
    <property type="molecule type" value="Genomic_DNA"/>
</dbReference>
<dbReference type="EMBL" id="CH471121">
    <property type="protein sequence ID" value="EAW53586.1"/>
    <property type="molecule type" value="Genomic_DNA"/>
</dbReference>
<dbReference type="EMBL" id="CH471121">
    <property type="protein sequence ID" value="EAW53587.1"/>
    <property type="molecule type" value="Genomic_DNA"/>
</dbReference>
<dbReference type="EMBL" id="BC020622">
    <property type="protein sequence ID" value="AAH20622.1"/>
    <property type="molecule type" value="mRNA"/>
</dbReference>
<dbReference type="EMBL" id="BC072681">
    <property type="protein sequence ID" value="AAH72681.1"/>
    <property type="molecule type" value="mRNA"/>
</dbReference>
<dbReference type="EMBL" id="AL122102">
    <property type="protein sequence ID" value="CAB59268.1"/>
    <property type="molecule type" value="mRNA"/>
</dbReference>
<dbReference type="CCDS" id="CCDS72903.1">
    <molecule id="Q6GQQ9-1"/>
</dbReference>
<dbReference type="PIR" id="T34535">
    <property type="entry name" value="T34535"/>
</dbReference>
<dbReference type="RefSeq" id="NP_064590.2">
    <molecule id="Q6GQQ9-1"/>
    <property type="nucleotide sequence ID" value="NM_020205.4"/>
</dbReference>
<dbReference type="RefSeq" id="XP_047281673.1">
    <molecule id="Q6GQQ9-1"/>
    <property type="nucleotide sequence ID" value="XM_047425717.1"/>
</dbReference>
<dbReference type="RefSeq" id="XP_047281676.1">
    <molecule id="Q6GQQ9-1"/>
    <property type="nucleotide sequence ID" value="XM_047425720.1"/>
</dbReference>
<dbReference type="RefSeq" id="XP_047281677.1">
    <molecule id="Q6GQQ9-1"/>
    <property type="nucleotide sequence ID" value="XM_047425721.1"/>
</dbReference>
<dbReference type="RefSeq" id="XP_054193738.1">
    <molecule id="Q6GQQ9-1"/>
    <property type="nucleotide sequence ID" value="XM_054337763.1"/>
</dbReference>
<dbReference type="RefSeq" id="XP_054193739.1">
    <molecule id="Q6GQQ9-1"/>
    <property type="nucleotide sequence ID" value="XM_054337764.1"/>
</dbReference>
<dbReference type="RefSeq" id="XP_054193740.1">
    <molecule id="Q6GQQ9-1"/>
    <property type="nucleotide sequence ID" value="XM_054337765.1"/>
</dbReference>
<dbReference type="PDB" id="5LRU">
    <property type="method" value="X-ray"/>
    <property type="resolution" value="2.20 A"/>
    <property type="chains" value="A=129-438"/>
</dbReference>
<dbReference type="PDB" id="5LRV">
    <property type="method" value="X-ray"/>
    <property type="resolution" value="2.80 A"/>
    <property type="chains" value="A=129-438"/>
</dbReference>
<dbReference type="PDB" id="5LRW">
    <property type="method" value="X-ray"/>
    <property type="resolution" value="2.00 A"/>
    <property type="chains" value="A/C=129-266, A/C=292-438"/>
</dbReference>
<dbReference type="PDBsum" id="5LRU"/>
<dbReference type="PDBsum" id="5LRV"/>
<dbReference type="PDBsum" id="5LRW"/>
<dbReference type="SMR" id="Q6GQQ9"/>
<dbReference type="BioGRID" id="121281">
    <property type="interactions" value="69"/>
</dbReference>
<dbReference type="DIP" id="DIP-33805N"/>
<dbReference type="FunCoup" id="Q6GQQ9">
    <property type="interactions" value="2203"/>
</dbReference>
<dbReference type="IntAct" id="Q6GQQ9">
    <property type="interactions" value="74"/>
</dbReference>
<dbReference type="STRING" id="9606.ENSP00000462729"/>
<dbReference type="BindingDB" id="Q6GQQ9"/>
<dbReference type="ChEMBL" id="CHEMBL4630838"/>
<dbReference type="MEROPS" id="C64.001"/>
<dbReference type="GlyCosmos" id="Q6GQQ9">
    <property type="glycosylation" value="1 site, 1 glycan"/>
</dbReference>
<dbReference type="GlyGen" id="Q6GQQ9">
    <property type="glycosylation" value="1 site, 1 O-linked glycan (1 site)"/>
</dbReference>
<dbReference type="iPTMnet" id="Q6GQQ9"/>
<dbReference type="PhosphoSitePlus" id="Q6GQQ9"/>
<dbReference type="BioMuta" id="OTUD7B"/>
<dbReference type="DMDM" id="51701318"/>
<dbReference type="jPOST" id="Q6GQQ9"/>
<dbReference type="MassIVE" id="Q6GQQ9"/>
<dbReference type="PaxDb" id="9606-ENSP00000462729"/>
<dbReference type="PeptideAtlas" id="Q6GQQ9"/>
<dbReference type="ProteomicsDB" id="66318">
    <molecule id="Q6GQQ9-1"/>
</dbReference>
<dbReference type="Pumba" id="Q6GQQ9"/>
<dbReference type="Antibodypedia" id="72463">
    <property type="antibodies" value="233 antibodies from 30 providers"/>
</dbReference>
<dbReference type="DNASU" id="56957"/>
<dbReference type="Ensembl" id="ENST00000581312.6">
    <molecule id="Q6GQQ9-1"/>
    <property type="protein sequence ID" value="ENSP00000462729.1"/>
    <property type="gene ID" value="ENSG00000264522.6"/>
</dbReference>
<dbReference type="GeneID" id="56957"/>
<dbReference type="KEGG" id="hsa:56957"/>
<dbReference type="MANE-Select" id="ENST00000581312.6">
    <property type="protein sequence ID" value="ENSP00000462729.1"/>
    <property type="RefSeq nucleotide sequence ID" value="NM_020205.4"/>
    <property type="RefSeq protein sequence ID" value="NP_064590.2"/>
</dbReference>
<dbReference type="UCSC" id="uc001etn.5">
    <molecule id="Q6GQQ9-1"/>
    <property type="organism name" value="human"/>
</dbReference>
<dbReference type="AGR" id="HGNC:16683"/>
<dbReference type="CTD" id="56957"/>
<dbReference type="DisGeNET" id="56957"/>
<dbReference type="GeneCards" id="OTUD7B"/>
<dbReference type="HGNC" id="HGNC:16683">
    <property type="gene designation" value="OTUD7B"/>
</dbReference>
<dbReference type="HPA" id="ENSG00000264522">
    <property type="expression patterns" value="Low tissue specificity"/>
</dbReference>
<dbReference type="MIM" id="611748">
    <property type="type" value="gene"/>
</dbReference>
<dbReference type="neXtProt" id="NX_Q6GQQ9"/>
<dbReference type="OpenTargets" id="ENSG00000264522"/>
<dbReference type="PharmGKB" id="PA134873802"/>
<dbReference type="VEuPathDB" id="HostDB:ENSG00000264522"/>
<dbReference type="eggNOG" id="KOG4345">
    <property type="taxonomic scope" value="Eukaryota"/>
</dbReference>
<dbReference type="GeneTree" id="ENSGT00940000159172"/>
<dbReference type="HOGENOM" id="CLU_013263_0_0_1"/>
<dbReference type="InParanoid" id="Q6GQQ9"/>
<dbReference type="OMA" id="KEWEWGK"/>
<dbReference type="OrthoDB" id="10064699at2759"/>
<dbReference type="PAN-GO" id="Q6GQQ9">
    <property type="GO annotations" value="9 GO annotations based on evolutionary models"/>
</dbReference>
<dbReference type="PhylomeDB" id="Q6GQQ9"/>
<dbReference type="TreeFam" id="TF323312"/>
<dbReference type="PathwayCommons" id="Q6GQQ9"/>
<dbReference type="Reactome" id="R-HSA-5357786">
    <property type="pathway name" value="TNFR1-induced proapoptotic signaling"/>
</dbReference>
<dbReference type="Reactome" id="R-HSA-5357905">
    <property type="pathway name" value="Regulation of TNFR1 signaling"/>
</dbReference>
<dbReference type="Reactome" id="R-HSA-5357956">
    <property type="pathway name" value="TNFR1-induced NF-kappa-B signaling pathway"/>
</dbReference>
<dbReference type="Reactome" id="R-HSA-5689896">
    <property type="pathway name" value="Ovarian tumor domain proteases"/>
</dbReference>
<dbReference type="SignaLink" id="Q6GQQ9"/>
<dbReference type="SIGNOR" id="Q6GQQ9"/>
<dbReference type="BioGRID-ORCS" id="56957">
    <property type="hits" value="21 hits in 1198 CRISPR screens"/>
</dbReference>
<dbReference type="ChiTaRS" id="OTUD7B">
    <property type="organism name" value="human"/>
</dbReference>
<dbReference type="GeneWiki" id="OTUD7B"/>
<dbReference type="GenomeRNAi" id="56957"/>
<dbReference type="Pharos" id="Q6GQQ9">
    <property type="development level" value="Tbio"/>
</dbReference>
<dbReference type="PRO" id="PR:Q6GQQ9"/>
<dbReference type="Proteomes" id="UP000005640">
    <property type="component" value="Chromosome 1"/>
</dbReference>
<dbReference type="RNAct" id="Q6GQQ9">
    <property type="molecule type" value="protein"/>
</dbReference>
<dbReference type="Bgee" id="ENSG00000264522">
    <property type="expression patterns" value="Expressed in buccal mucosa cell and 183 other cell types or tissues"/>
</dbReference>
<dbReference type="ExpressionAtlas" id="Q6GQQ9">
    <property type="expression patterns" value="baseline and differential"/>
</dbReference>
<dbReference type="GO" id="GO:0005737">
    <property type="term" value="C:cytoplasm"/>
    <property type="evidence" value="ECO:0000314"/>
    <property type="project" value="HGNC-UCL"/>
</dbReference>
<dbReference type="GO" id="GO:0005829">
    <property type="term" value="C:cytosol"/>
    <property type="evidence" value="ECO:0000304"/>
    <property type="project" value="Reactome"/>
</dbReference>
<dbReference type="GO" id="GO:0005634">
    <property type="term" value="C:nucleus"/>
    <property type="evidence" value="ECO:0000314"/>
    <property type="project" value="HGNC-UCL"/>
</dbReference>
<dbReference type="GO" id="GO:0004843">
    <property type="term" value="F:cysteine-type deubiquitinase activity"/>
    <property type="evidence" value="ECO:0000314"/>
    <property type="project" value="UniProtKB"/>
</dbReference>
<dbReference type="GO" id="GO:0008234">
    <property type="term" value="F:cysteine-type peptidase activity"/>
    <property type="evidence" value="ECO:0000250"/>
    <property type="project" value="UniProtKB"/>
</dbReference>
<dbReference type="GO" id="GO:0003677">
    <property type="term" value="F:DNA binding"/>
    <property type="evidence" value="ECO:0007669"/>
    <property type="project" value="InterPro"/>
</dbReference>
<dbReference type="GO" id="GO:1990380">
    <property type="term" value="F:K48-linked deubiquitinase activity"/>
    <property type="evidence" value="ECO:0000314"/>
    <property type="project" value="ParkinsonsUK-UCL"/>
</dbReference>
<dbReference type="GO" id="GO:0070530">
    <property type="term" value="F:K63-linked polyubiquitin modification-dependent protein binding"/>
    <property type="evidence" value="ECO:0000318"/>
    <property type="project" value="GO_Central"/>
</dbReference>
<dbReference type="GO" id="GO:0008270">
    <property type="term" value="F:zinc ion binding"/>
    <property type="evidence" value="ECO:0007669"/>
    <property type="project" value="UniProtKB-KW"/>
</dbReference>
<dbReference type="GO" id="GO:0002250">
    <property type="term" value="P:adaptive immune response"/>
    <property type="evidence" value="ECO:0007669"/>
    <property type="project" value="UniProtKB-KW"/>
</dbReference>
<dbReference type="GO" id="GO:0001701">
    <property type="term" value="P:in utero embryonic development"/>
    <property type="evidence" value="ECO:0007669"/>
    <property type="project" value="Ensembl"/>
</dbReference>
<dbReference type="GO" id="GO:0002385">
    <property type="term" value="P:mucosal immune response"/>
    <property type="evidence" value="ECO:0000250"/>
    <property type="project" value="UniProtKB"/>
</dbReference>
<dbReference type="GO" id="GO:0043124">
    <property type="term" value="P:negative regulation of canonical NF-kappaB signal transduction"/>
    <property type="evidence" value="ECO:0000314"/>
    <property type="project" value="HGNC-UCL"/>
</dbReference>
<dbReference type="GO" id="GO:0032717">
    <property type="term" value="P:negative regulation of interleukin-8 production"/>
    <property type="evidence" value="ECO:0000314"/>
    <property type="project" value="ParkinsonsUK-UCL"/>
</dbReference>
<dbReference type="GO" id="GO:1900181">
    <property type="term" value="P:negative regulation of protein localization to nucleus"/>
    <property type="evidence" value="ECO:0000314"/>
    <property type="project" value="ParkinsonsUK-UCL"/>
</dbReference>
<dbReference type="GO" id="GO:1904262">
    <property type="term" value="P:negative regulation of TORC1 signaling"/>
    <property type="evidence" value="ECO:0000314"/>
    <property type="project" value="UniProtKB"/>
</dbReference>
<dbReference type="GO" id="GO:0000122">
    <property type="term" value="P:negative regulation of transcription by RNA polymerase II"/>
    <property type="evidence" value="ECO:0000314"/>
    <property type="project" value="ParkinsonsUK-UCL"/>
</dbReference>
<dbReference type="GO" id="GO:1904515">
    <property type="term" value="P:positive regulation of TORC2 signaling"/>
    <property type="evidence" value="ECO:0000314"/>
    <property type="project" value="UniProtKB"/>
</dbReference>
<dbReference type="GO" id="GO:0016579">
    <property type="term" value="P:protein deubiquitination"/>
    <property type="evidence" value="ECO:0000304"/>
    <property type="project" value="Reactome"/>
</dbReference>
<dbReference type="GO" id="GO:0071947">
    <property type="term" value="P:protein deubiquitination involved in ubiquitin-dependent protein catabolic process"/>
    <property type="evidence" value="ECO:0000318"/>
    <property type="project" value="GO_Central"/>
</dbReference>
<dbReference type="GO" id="GO:0035871">
    <property type="term" value="P:protein K11-linked deubiquitination"/>
    <property type="evidence" value="ECO:0000314"/>
    <property type="project" value="UniProtKB"/>
</dbReference>
<dbReference type="GO" id="GO:0071108">
    <property type="term" value="P:protein K48-linked deubiquitination"/>
    <property type="evidence" value="ECO:0000314"/>
    <property type="project" value="ParkinsonsUK-UCL"/>
</dbReference>
<dbReference type="GO" id="GO:0070536">
    <property type="term" value="P:protein K63-linked deubiquitination"/>
    <property type="evidence" value="ECO:0000314"/>
    <property type="project" value="UniProtKB"/>
</dbReference>
<dbReference type="CDD" id="cd22772">
    <property type="entry name" value="OTU_OTUD7B"/>
    <property type="match status" value="1"/>
</dbReference>
<dbReference type="CDD" id="cd14347">
    <property type="entry name" value="UBA_Cezanne_like"/>
    <property type="match status" value="1"/>
</dbReference>
<dbReference type="FunFam" id="1.10.8.10:FF:000017">
    <property type="entry name" value="OTU domain-containing protein 7A"/>
    <property type="match status" value="1"/>
</dbReference>
<dbReference type="FunFam" id="1.20.5.4770:FF:000003">
    <property type="entry name" value="OTU domain-containing protein 7B"/>
    <property type="match status" value="1"/>
</dbReference>
<dbReference type="Gene3D" id="1.20.5.4770">
    <property type="match status" value="1"/>
</dbReference>
<dbReference type="Gene3D" id="1.10.8.10">
    <property type="entry name" value="DNA helicase RuvA subunit, C-terminal domain"/>
    <property type="match status" value="1"/>
</dbReference>
<dbReference type="InterPro" id="IPR051346">
    <property type="entry name" value="OTU_Deubiquitinase"/>
</dbReference>
<dbReference type="InterPro" id="IPR003323">
    <property type="entry name" value="OTU_dom"/>
</dbReference>
<dbReference type="InterPro" id="IPR054109">
    <property type="entry name" value="UBA_8"/>
</dbReference>
<dbReference type="InterPro" id="IPR002653">
    <property type="entry name" value="Znf_A20"/>
</dbReference>
<dbReference type="PANTHER" id="PTHR13367:SF8">
    <property type="entry name" value="OTU DOMAIN-CONTAINING PROTEIN 7B"/>
    <property type="match status" value="1"/>
</dbReference>
<dbReference type="PANTHER" id="PTHR13367">
    <property type="entry name" value="UBIQUITIN THIOESTERASE"/>
    <property type="match status" value="1"/>
</dbReference>
<dbReference type="Pfam" id="PF02338">
    <property type="entry name" value="OTU"/>
    <property type="match status" value="1"/>
</dbReference>
<dbReference type="Pfam" id="PF22566">
    <property type="entry name" value="UBA_8"/>
    <property type="match status" value="1"/>
</dbReference>
<dbReference type="Pfam" id="PF01754">
    <property type="entry name" value="zf-A20"/>
    <property type="match status" value="1"/>
</dbReference>
<dbReference type="SMART" id="SM00259">
    <property type="entry name" value="ZnF_A20"/>
    <property type="match status" value="1"/>
</dbReference>
<dbReference type="SUPFAM" id="SSF57716">
    <property type="entry name" value="Glucocorticoid receptor-like (DNA-binding domain)"/>
    <property type="match status" value="1"/>
</dbReference>
<dbReference type="PROSITE" id="PS50802">
    <property type="entry name" value="OTU"/>
    <property type="match status" value="1"/>
</dbReference>
<dbReference type="PROSITE" id="PS51036">
    <property type="entry name" value="ZF_A20"/>
    <property type="match status" value="1"/>
</dbReference>
<reference key="1">
    <citation type="journal article" date="2001" name="Biochem. J.">
        <title>Isolation and characterization of two novel A20-like proteins.</title>
        <authorList>
            <person name="Evans P.C."/>
            <person name="Taylor E.R."/>
            <person name="Coadwell J."/>
            <person name="Heyninck K."/>
            <person name="Beyaert R."/>
            <person name="Kilshaw P.J."/>
        </authorList>
    </citation>
    <scope>NUCLEOTIDE SEQUENCE [MRNA] (ISOFORM 1)</scope>
    <scope>FUNCTION</scope>
    <scope>SUBCELLULAR LOCATION</scope>
    <scope>TISSUE SPECIFICITY</scope>
    <scope>INTERACTION WITH TRAF6</scope>
    <source>
        <tissue>Lymphocyte</tissue>
    </source>
</reference>
<reference key="2">
    <citation type="journal article" date="2004" name="Nat. Genet.">
        <title>Complete sequencing and characterization of 21,243 full-length human cDNAs.</title>
        <authorList>
            <person name="Ota T."/>
            <person name="Suzuki Y."/>
            <person name="Nishikawa T."/>
            <person name="Otsuki T."/>
            <person name="Sugiyama T."/>
            <person name="Irie R."/>
            <person name="Wakamatsu A."/>
            <person name="Hayashi K."/>
            <person name="Sato H."/>
            <person name="Nagai K."/>
            <person name="Kimura K."/>
            <person name="Makita H."/>
            <person name="Sekine M."/>
            <person name="Obayashi M."/>
            <person name="Nishi T."/>
            <person name="Shibahara T."/>
            <person name="Tanaka T."/>
            <person name="Ishii S."/>
            <person name="Yamamoto J."/>
            <person name="Saito K."/>
            <person name="Kawai Y."/>
            <person name="Isono Y."/>
            <person name="Nakamura Y."/>
            <person name="Nagahari K."/>
            <person name="Murakami K."/>
            <person name="Yasuda T."/>
            <person name="Iwayanagi T."/>
            <person name="Wagatsuma M."/>
            <person name="Shiratori A."/>
            <person name="Sudo H."/>
            <person name="Hosoiri T."/>
            <person name="Kaku Y."/>
            <person name="Kodaira H."/>
            <person name="Kondo H."/>
            <person name="Sugawara M."/>
            <person name="Takahashi M."/>
            <person name="Kanda K."/>
            <person name="Yokoi T."/>
            <person name="Furuya T."/>
            <person name="Kikkawa E."/>
            <person name="Omura Y."/>
            <person name="Abe K."/>
            <person name="Kamihara K."/>
            <person name="Katsuta N."/>
            <person name="Sato K."/>
            <person name="Tanikawa M."/>
            <person name="Yamazaki M."/>
            <person name="Ninomiya K."/>
            <person name="Ishibashi T."/>
            <person name="Yamashita H."/>
            <person name="Murakawa K."/>
            <person name="Fujimori K."/>
            <person name="Tanai H."/>
            <person name="Kimata M."/>
            <person name="Watanabe M."/>
            <person name="Hiraoka S."/>
            <person name="Chiba Y."/>
            <person name="Ishida S."/>
            <person name="Ono Y."/>
            <person name="Takiguchi S."/>
            <person name="Watanabe S."/>
            <person name="Yosida M."/>
            <person name="Hotuta T."/>
            <person name="Kusano J."/>
            <person name="Kanehori K."/>
            <person name="Takahashi-Fujii A."/>
            <person name="Hara H."/>
            <person name="Tanase T.-O."/>
            <person name="Nomura Y."/>
            <person name="Togiya S."/>
            <person name="Komai F."/>
            <person name="Hara R."/>
            <person name="Takeuchi K."/>
            <person name="Arita M."/>
            <person name="Imose N."/>
            <person name="Musashino K."/>
            <person name="Yuuki H."/>
            <person name="Oshima A."/>
            <person name="Sasaki N."/>
            <person name="Aotsuka S."/>
            <person name="Yoshikawa Y."/>
            <person name="Matsunawa H."/>
            <person name="Ichihara T."/>
            <person name="Shiohata N."/>
            <person name="Sano S."/>
            <person name="Moriya S."/>
            <person name="Momiyama H."/>
            <person name="Satoh N."/>
            <person name="Takami S."/>
            <person name="Terashima Y."/>
            <person name="Suzuki O."/>
            <person name="Nakagawa S."/>
            <person name="Senoh A."/>
            <person name="Mizoguchi H."/>
            <person name="Goto Y."/>
            <person name="Shimizu F."/>
            <person name="Wakebe H."/>
            <person name="Hishigaki H."/>
            <person name="Watanabe T."/>
            <person name="Sugiyama A."/>
            <person name="Takemoto M."/>
            <person name="Kawakami B."/>
            <person name="Yamazaki M."/>
            <person name="Watanabe K."/>
            <person name="Kumagai A."/>
            <person name="Itakura S."/>
            <person name="Fukuzumi Y."/>
            <person name="Fujimori Y."/>
            <person name="Komiyama M."/>
            <person name="Tashiro H."/>
            <person name="Tanigami A."/>
            <person name="Fujiwara T."/>
            <person name="Ono T."/>
            <person name="Yamada K."/>
            <person name="Fujii Y."/>
            <person name="Ozaki K."/>
            <person name="Hirao M."/>
            <person name="Ohmori Y."/>
            <person name="Kawabata A."/>
            <person name="Hikiji T."/>
            <person name="Kobatake N."/>
            <person name="Inagaki H."/>
            <person name="Ikema Y."/>
            <person name="Okamoto S."/>
            <person name="Okitani R."/>
            <person name="Kawakami T."/>
            <person name="Noguchi S."/>
            <person name="Itoh T."/>
            <person name="Shigeta K."/>
            <person name="Senba T."/>
            <person name="Matsumura K."/>
            <person name="Nakajima Y."/>
            <person name="Mizuno T."/>
            <person name="Morinaga M."/>
            <person name="Sasaki M."/>
            <person name="Togashi T."/>
            <person name="Oyama M."/>
            <person name="Hata H."/>
            <person name="Watanabe M."/>
            <person name="Komatsu T."/>
            <person name="Mizushima-Sugano J."/>
            <person name="Satoh T."/>
            <person name="Shirai Y."/>
            <person name="Takahashi Y."/>
            <person name="Nakagawa K."/>
            <person name="Okumura K."/>
            <person name="Nagase T."/>
            <person name="Nomura N."/>
            <person name="Kikuchi H."/>
            <person name="Masuho Y."/>
            <person name="Yamashita R."/>
            <person name="Nakai K."/>
            <person name="Yada T."/>
            <person name="Nakamura Y."/>
            <person name="Ohara O."/>
            <person name="Isogai T."/>
            <person name="Sugano S."/>
        </authorList>
    </citation>
    <scope>NUCLEOTIDE SEQUENCE [LARGE SCALE MRNA] (ISOFORM 2)</scope>
    <source>
        <tissue>Brain</tissue>
    </source>
</reference>
<reference key="3">
    <citation type="journal article" date="2006" name="Nature">
        <title>The DNA sequence and biological annotation of human chromosome 1.</title>
        <authorList>
            <person name="Gregory S.G."/>
            <person name="Barlow K.F."/>
            <person name="McLay K.E."/>
            <person name="Kaul R."/>
            <person name="Swarbreck D."/>
            <person name="Dunham A."/>
            <person name="Scott C.E."/>
            <person name="Howe K.L."/>
            <person name="Woodfine K."/>
            <person name="Spencer C.C.A."/>
            <person name="Jones M.C."/>
            <person name="Gillson C."/>
            <person name="Searle S."/>
            <person name="Zhou Y."/>
            <person name="Kokocinski F."/>
            <person name="McDonald L."/>
            <person name="Evans R."/>
            <person name="Phillips K."/>
            <person name="Atkinson A."/>
            <person name="Cooper R."/>
            <person name="Jones C."/>
            <person name="Hall R.E."/>
            <person name="Andrews T.D."/>
            <person name="Lloyd C."/>
            <person name="Ainscough R."/>
            <person name="Almeida J.P."/>
            <person name="Ambrose K.D."/>
            <person name="Anderson F."/>
            <person name="Andrew R.W."/>
            <person name="Ashwell R.I.S."/>
            <person name="Aubin K."/>
            <person name="Babbage A.K."/>
            <person name="Bagguley C.L."/>
            <person name="Bailey J."/>
            <person name="Beasley H."/>
            <person name="Bethel G."/>
            <person name="Bird C.P."/>
            <person name="Bray-Allen S."/>
            <person name="Brown J.Y."/>
            <person name="Brown A.J."/>
            <person name="Buckley D."/>
            <person name="Burton J."/>
            <person name="Bye J."/>
            <person name="Carder C."/>
            <person name="Chapman J.C."/>
            <person name="Clark S.Y."/>
            <person name="Clarke G."/>
            <person name="Clee C."/>
            <person name="Cobley V."/>
            <person name="Collier R.E."/>
            <person name="Corby N."/>
            <person name="Coville G.J."/>
            <person name="Davies J."/>
            <person name="Deadman R."/>
            <person name="Dunn M."/>
            <person name="Earthrowl M."/>
            <person name="Ellington A.G."/>
            <person name="Errington H."/>
            <person name="Frankish A."/>
            <person name="Frankland J."/>
            <person name="French L."/>
            <person name="Garner P."/>
            <person name="Garnett J."/>
            <person name="Gay L."/>
            <person name="Ghori M.R.J."/>
            <person name="Gibson R."/>
            <person name="Gilby L.M."/>
            <person name="Gillett W."/>
            <person name="Glithero R.J."/>
            <person name="Grafham D.V."/>
            <person name="Griffiths C."/>
            <person name="Griffiths-Jones S."/>
            <person name="Grocock R."/>
            <person name="Hammond S."/>
            <person name="Harrison E.S.I."/>
            <person name="Hart E."/>
            <person name="Haugen E."/>
            <person name="Heath P.D."/>
            <person name="Holmes S."/>
            <person name="Holt K."/>
            <person name="Howden P.J."/>
            <person name="Hunt A.R."/>
            <person name="Hunt S.E."/>
            <person name="Hunter G."/>
            <person name="Isherwood J."/>
            <person name="James R."/>
            <person name="Johnson C."/>
            <person name="Johnson D."/>
            <person name="Joy A."/>
            <person name="Kay M."/>
            <person name="Kershaw J.K."/>
            <person name="Kibukawa M."/>
            <person name="Kimberley A.M."/>
            <person name="King A."/>
            <person name="Knights A.J."/>
            <person name="Lad H."/>
            <person name="Laird G."/>
            <person name="Lawlor S."/>
            <person name="Leongamornlert D.A."/>
            <person name="Lloyd D.M."/>
            <person name="Loveland J."/>
            <person name="Lovell J."/>
            <person name="Lush M.J."/>
            <person name="Lyne R."/>
            <person name="Martin S."/>
            <person name="Mashreghi-Mohammadi M."/>
            <person name="Matthews L."/>
            <person name="Matthews N.S.W."/>
            <person name="McLaren S."/>
            <person name="Milne S."/>
            <person name="Mistry S."/>
            <person name="Moore M.J.F."/>
            <person name="Nickerson T."/>
            <person name="O'Dell C.N."/>
            <person name="Oliver K."/>
            <person name="Palmeiri A."/>
            <person name="Palmer S.A."/>
            <person name="Parker A."/>
            <person name="Patel D."/>
            <person name="Pearce A.V."/>
            <person name="Peck A.I."/>
            <person name="Pelan S."/>
            <person name="Phelps K."/>
            <person name="Phillimore B.J."/>
            <person name="Plumb R."/>
            <person name="Rajan J."/>
            <person name="Raymond C."/>
            <person name="Rouse G."/>
            <person name="Saenphimmachak C."/>
            <person name="Sehra H.K."/>
            <person name="Sheridan E."/>
            <person name="Shownkeen R."/>
            <person name="Sims S."/>
            <person name="Skuce C.D."/>
            <person name="Smith M."/>
            <person name="Steward C."/>
            <person name="Subramanian S."/>
            <person name="Sycamore N."/>
            <person name="Tracey A."/>
            <person name="Tromans A."/>
            <person name="Van Helmond Z."/>
            <person name="Wall M."/>
            <person name="Wallis J.M."/>
            <person name="White S."/>
            <person name="Whitehead S.L."/>
            <person name="Wilkinson J.E."/>
            <person name="Willey D.L."/>
            <person name="Williams H."/>
            <person name="Wilming L."/>
            <person name="Wray P.W."/>
            <person name="Wu Z."/>
            <person name="Coulson A."/>
            <person name="Vaudin M."/>
            <person name="Sulston J.E."/>
            <person name="Durbin R.M."/>
            <person name="Hubbard T."/>
            <person name="Wooster R."/>
            <person name="Dunham I."/>
            <person name="Carter N.P."/>
            <person name="McVean G."/>
            <person name="Ross M.T."/>
            <person name="Harrow J."/>
            <person name="Olson M.V."/>
            <person name="Beck S."/>
            <person name="Rogers J."/>
            <person name="Bentley D.R."/>
        </authorList>
    </citation>
    <scope>NUCLEOTIDE SEQUENCE [LARGE SCALE GENOMIC DNA]</scope>
</reference>
<reference key="4">
    <citation type="submission" date="2005-09" db="EMBL/GenBank/DDBJ databases">
        <authorList>
            <person name="Mural R.J."/>
            <person name="Istrail S."/>
            <person name="Sutton G.G."/>
            <person name="Florea L."/>
            <person name="Halpern A.L."/>
            <person name="Mobarry C.M."/>
            <person name="Lippert R."/>
            <person name="Walenz B."/>
            <person name="Shatkay H."/>
            <person name="Dew I."/>
            <person name="Miller J.R."/>
            <person name="Flanigan M.J."/>
            <person name="Edwards N.J."/>
            <person name="Bolanos R."/>
            <person name="Fasulo D."/>
            <person name="Halldorsson B.V."/>
            <person name="Hannenhalli S."/>
            <person name="Turner R."/>
            <person name="Yooseph S."/>
            <person name="Lu F."/>
            <person name="Nusskern D.R."/>
            <person name="Shue B.C."/>
            <person name="Zheng X.H."/>
            <person name="Zhong F."/>
            <person name="Delcher A.L."/>
            <person name="Huson D.H."/>
            <person name="Kravitz S.A."/>
            <person name="Mouchard L."/>
            <person name="Reinert K."/>
            <person name="Remington K.A."/>
            <person name="Clark A.G."/>
            <person name="Waterman M.S."/>
            <person name="Eichler E.E."/>
            <person name="Adams M.D."/>
            <person name="Hunkapiller M.W."/>
            <person name="Myers E.W."/>
            <person name="Venter J.C."/>
        </authorList>
    </citation>
    <scope>NUCLEOTIDE SEQUENCE [LARGE SCALE GENOMIC DNA]</scope>
</reference>
<reference key="5">
    <citation type="journal article" date="2004" name="Genome Res.">
        <title>The status, quality, and expansion of the NIH full-length cDNA project: the Mammalian Gene Collection (MGC).</title>
        <authorList>
            <consortium name="The MGC Project Team"/>
        </authorList>
    </citation>
    <scope>NUCLEOTIDE SEQUENCE [LARGE SCALE MRNA]</scope>
    <source>
        <tissue>Eye</tissue>
        <tissue>Prostate</tissue>
    </source>
</reference>
<reference key="6">
    <citation type="journal article" date="2007" name="BMC Genomics">
        <title>The full-ORF clone resource of the German cDNA consortium.</title>
        <authorList>
            <person name="Bechtel S."/>
            <person name="Rosenfelder H."/>
            <person name="Duda A."/>
            <person name="Schmidt C.P."/>
            <person name="Ernst U."/>
            <person name="Wellenreuther R."/>
            <person name="Mehrle A."/>
            <person name="Schuster C."/>
            <person name="Bahr A."/>
            <person name="Bloecker H."/>
            <person name="Heubner D."/>
            <person name="Hoerlein A."/>
            <person name="Michel G."/>
            <person name="Wedler H."/>
            <person name="Koehrer K."/>
            <person name="Ottenwaelder B."/>
            <person name="Poustka A."/>
            <person name="Wiemann S."/>
            <person name="Schupp I."/>
        </authorList>
    </citation>
    <scope>NUCLEOTIDE SEQUENCE [LARGE SCALE MRNA] OF 437-843</scope>
    <source>
        <tissue>Testis</tissue>
    </source>
</reference>
<reference key="7">
    <citation type="journal article" date="2003" name="J. Biol. Chem.">
        <title>A novel type of deubiquitinating enzyme.</title>
        <authorList>
            <person name="Evans P.C."/>
            <person name="Smith T.S."/>
            <person name="Lai M.-J."/>
            <person name="Williams M.G."/>
            <person name="Burke D.F."/>
            <person name="Heyninck K."/>
            <person name="Kreike M.M."/>
            <person name="Beyaert R."/>
            <person name="Blundell T.L."/>
            <person name="Kilshaw P.J."/>
        </authorList>
    </citation>
    <scope>FUNCTION</scope>
    <scope>CATALYTIC ACTIVITY</scope>
    <scope>TISSUE SPECIFICITY</scope>
    <scope>MUTAGENESIS OF CYS-194</scope>
</reference>
<reference key="8">
    <citation type="journal article" date="2004" name="Biochem. J.">
        <title>Zinc-finger protein A20, a regulator of inflammation and cell survival, has de-ubiquitinating activity.</title>
        <authorList>
            <person name="Evans P.C."/>
            <person name="Ovaa H."/>
            <person name="Hamon M."/>
            <person name="Kilshaw P.J."/>
            <person name="Hamm S."/>
            <person name="Bauer S."/>
            <person name="Ploegh H.L."/>
            <person name="Smith T.S."/>
        </authorList>
    </citation>
    <scope>MUTAGENESIS OF CYS-194</scope>
    <scope>CATALYTIC ACTIVITY</scope>
</reference>
<reference key="9">
    <citation type="journal article" date="2006" name="Nat. Biotechnol.">
        <title>A probability-based approach for high-throughput protein phosphorylation analysis and site localization.</title>
        <authorList>
            <person name="Beausoleil S.A."/>
            <person name="Villen J."/>
            <person name="Gerber S.A."/>
            <person name="Rush J."/>
            <person name="Gygi S.P."/>
        </authorList>
    </citation>
    <scope>IDENTIFICATION BY MASS SPECTROMETRY [LARGE SCALE ANALYSIS]</scope>
    <source>
        <tissue>Cervix carcinoma</tissue>
    </source>
</reference>
<reference key="10">
    <citation type="journal article" date="2008" name="J. Biol. Chem.">
        <title>NF-kappaB suppression by the deubiquitinating enzyme Cezanne: a novel negative feedback loop in pro-inflammatory signaling.</title>
        <authorList>
            <person name="Enesa K."/>
            <person name="Zakkar M."/>
            <person name="Chaudhury H."/>
            <person name="Luong le A."/>
            <person name="Rawlinson L."/>
            <person name="Mason J.C."/>
            <person name="Haskard D.O."/>
            <person name="Dean J.L."/>
            <person name="Evans P.C."/>
        </authorList>
    </citation>
    <scope>FUNCTION</scope>
    <scope>INDUCTION</scope>
</reference>
<reference key="11">
    <citation type="journal article" date="2008" name="J. Proteome Res.">
        <title>Combining protein-based IMAC, peptide-based IMAC, and MudPIT for efficient phosphoproteomic analysis.</title>
        <authorList>
            <person name="Cantin G.T."/>
            <person name="Yi W."/>
            <person name="Lu B."/>
            <person name="Park S.K."/>
            <person name="Xu T."/>
            <person name="Lee J.-D."/>
            <person name="Yates J.R. III"/>
        </authorList>
    </citation>
    <scope>PHOSPHORYLATION [LARGE SCALE ANALYSIS] AT SER-100</scope>
    <scope>IDENTIFICATION BY MASS SPECTROMETRY [LARGE SCALE ANALYSIS]</scope>
    <source>
        <tissue>Cervix carcinoma</tissue>
    </source>
</reference>
<reference key="12">
    <citation type="journal article" date="2008" name="Proc. Natl. Acad. Sci. U.S.A.">
        <title>A quantitative atlas of mitotic phosphorylation.</title>
        <authorList>
            <person name="Dephoure N."/>
            <person name="Zhou C."/>
            <person name="Villen J."/>
            <person name="Beausoleil S.A."/>
            <person name="Bakalarski C.E."/>
            <person name="Elledge S.J."/>
            <person name="Gygi S.P."/>
        </authorList>
    </citation>
    <scope>PHOSPHORYLATION [LARGE SCALE ANALYSIS] AT SER-100</scope>
    <scope>IDENTIFICATION BY MASS SPECTROMETRY [LARGE SCALE ANALYSIS]</scope>
    <source>
        <tissue>Cervix carcinoma</tissue>
    </source>
</reference>
<reference key="13">
    <citation type="journal article" date="2009" name="Anal. Chem.">
        <title>Lys-N and trypsin cover complementary parts of the phosphoproteome in a refined SCX-based approach.</title>
        <authorList>
            <person name="Gauci S."/>
            <person name="Helbig A.O."/>
            <person name="Slijper M."/>
            <person name="Krijgsveld J."/>
            <person name="Heck A.J."/>
            <person name="Mohammed S."/>
        </authorList>
    </citation>
    <scope>IDENTIFICATION BY MASS SPECTROMETRY [LARGE SCALE ANALYSIS]</scope>
</reference>
<reference key="14">
    <citation type="journal article" date="2010" name="Nat. Struct. Mol. Biol.">
        <title>Lys11-linked ubiquitin chains adopt compact conformations and are preferentially hydrolyzed by the deubiquitinase Cezanne.</title>
        <authorList>
            <person name="Bremm A."/>
            <person name="Freund S.M."/>
            <person name="Komander D."/>
        </authorList>
    </citation>
    <scope>FUNCTION</scope>
</reference>
<reference key="15">
    <citation type="journal article" date="2010" name="Sci. Signal.">
        <title>Quantitative phosphoproteomics reveals widespread full phosphorylation site occupancy during mitosis.</title>
        <authorList>
            <person name="Olsen J.V."/>
            <person name="Vermeulen M."/>
            <person name="Santamaria A."/>
            <person name="Kumar C."/>
            <person name="Miller M.L."/>
            <person name="Jensen L.J."/>
            <person name="Gnad F."/>
            <person name="Cox J."/>
            <person name="Jensen T.S."/>
            <person name="Nigg E.A."/>
            <person name="Brunak S."/>
            <person name="Mann M."/>
        </authorList>
    </citation>
    <scope>IDENTIFICATION BY MASS SPECTROMETRY [LARGE SCALE ANALYSIS]</scope>
    <source>
        <tissue>Cervix carcinoma</tissue>
    </source>
</reference>
<reference key="16">
    <citation type="journal article" date="2011" name="BMC Syst. Biol.">
        <title>Initial characterization of the human central proteome.</title>
        <authorList>
            <person name="Burkard T.R."/>
            <person name="Planyavsky M."/>
            <person name="Kaupe I."/>
            <person name="Breitwieser F.P."/>
            <person name="Buerckstuemmer T."/>
            <person name="Bennett K.L."/>
            <person name="Superti-Furga G."/>
            <person name="Colinge J."/>
        </authorList>
    </citation>
    <scope>IDENTIFICATION BY MASS SPECTROMETRY [LARGE SCALE ANALYSIS]</scope>
</reference>
<reference key="17">
    <citation type="journal article" date="2011" name="J. Biol. Chem.">
        <title>DJ-1 enhances cell survival through the binding of cezanne, a negative regulator of NF-{kappa}B.</title>
        <authorList>
            <person name="McNally R.S."/>
            <person name="Davis B.K."/>
            <person name="Clements C.M."/>
            <person name="Accavitti-Loper M.A."/>
            <person name="Mak T.W."/>
            <person name="Ting J.P."/>
        </authorList>
    </citation>
    <scope>ACTIVITY REGULATION</scope>
    <scope>INTERACTION WITH PARK7</scope>
</reference>
<reference key="18">
    <citation type="journal article" date="2011" name="Sci. Signal.">
        <title>System-wide temporal characterization of the proteome and phosphoproteome of human embryonic stem cell differentiation.</title>
        <authorList>
            <person name="Rigbolt K.T."/>
            <person name="Prokhorova T.A."/>
            <person name="Akimov V."/>
            <person name="Henningsen J."/>
            <person name="Johansen P.T."/>
            <person name="Kratchmarova I."/>
            <person name="Kassem M."/>
            <person name="Mann M."/>
            <person name="Olsen J.V."/>
            <person name="Blagoev B."/>
        </authorList>
    </citation>
    <scope>IDENTIFICATION BY MASS SPECTROMETRY [LARGE SCALE ANALYSIS]</scope>
</reference>
<reference key="19">
    <citation type="journal article" date="2012" name="Biochem. J.">
        <title>A global survey of CRM1-dependent nuclear export sequences in the human deubiquitinase family.</title>
        <authorList>
            <person name="Garcia-Santisteban I."/>
            <person name="Banuelos S."/>
            <person name="Rodriguez J.A."/>
        </authorList>
    </citation>
    <scope>SUBCELLULAR LOCATION</scope>
</reference>
<reference key="20">
    <citation type="journal article" date="2012" name="Oncogene">
        <title>Deubiquitination of EGFR by Cezanne-1 contributes to cancer progression.</title>
        <authorList>
            <person name="Pareja F."/>
            <person name="Ferraro D.A."/>
            <person name="Rubin C."/>
            <person name="Cohen-Dvashi H."/>
            <person name="Zhang F."/>
            <person name="Aulmann S."/>
            <person name="Ben-Chetrit N."/>
            <person name="Pines G."/>
            <person name="Navon R."/>
            <person name="Crosetto N."/>
            <person name="Kostler W."/>
            <person name="Carvalho S."/>
            <person name="Lavi S."/>
            <person name="Schmitt F."/>
            <person name="Dikic I."/>
            <person name="Yakhini Z."/>
            <person name="Sinn P."/>
            <person name="Mills G.B."/>
            <person name="Yarden Y."/>
        </authorList>
    </citation>
    <scope>FUNCTION</scope>
    <scope>CATALYTIC ACTIVITY</scope>
    <scope>PHOSPHORYLATION</scope>
    <scope>INTERACTION WITH EGFR; ITCH AND NEDD4</scope>
    <scope>MUTAGENESIS OF CYS-194; PHE-809 AND TYR-810</scope>
</reference>
<reference key="21">
    <citation type="journal article" date="2013" name="Cell">
        <title>OTU deubiquitinases reveal mechanisms of linkage specificity and enable ubiquitin chain restriction analysis.</title>
        <authorList>
            <person name="Mevissen T.E."/>
            <person name="Hospenthal M.K."/>
            <person name="Geurink P.P."/>
            <person name="Elliott P.R."/>
            <person name="Akutsu M."/>
            <person name="Arnaudo N."/>
            <person name="Ekkebus R."/>
            <person name="Kulathu Y."/>
            <person name="Wauer T."/>
            <person name="El Oualid F."/>
            <person name="Freund S.M."/>
            <person name="Ovaa H."/>
            <person name="Komander D."/>
        </authorList>
    </citation>
    <scope>FUNCTION</scope>
    <scope>CATALYTIC ACTIVITY</scope>
</reference>
<reference key="22">
    <citation type="journal article" date="2013" name="J. Proteome Res.">
        <title>Toward a comprehensive characterization of a human cancer cell phosphoproteome.</title>
        <authorList>
            <person name="Zhou H."/>
            <person name="Di Palma S."/>
            <person name="Preisinger C."/>
            <person name="Peng M."/>
            <person name="Polat A.N."/>
            <person name="Heck A.J."/>
            <person name="Mohammed S."/>
        </authorList>
    </citation>
    <scope>PHOSPHORYLATION [LARGE SCALE ANALYSIS] AT SER-100 AND SER-467</scope>
    <scope>IDENTIFICATION BY MASS SPECTROMETRY [LARGE SCALE ANALYSIS]</scope>
    <source>
        <tissue>Cervix carcinoma</tissue>
        <tissue>Erythroleukemia</tissue>
    </source>
</reference>
<reference key="23">
    <citation type="journal article" date="2014" name="J. Proteomics">
        <title>An enzyme assisted RP-RPLC approach for in-depth analysis of human liver phosphoproteome.</title>
        <authorList>
            <person name="Bian Y."/>
            <person name="Song C."/>
            <person name="Cheng K."/>
            <person name="Dong M."/>
            <person name="Wang F."/>
            <person name="Huang J."/>
            <person name="Sun D."/>
            <person name="Wang L."/>
            <person name="Ye M."/>
            <person name="Zou H."/>
        </authorList>
    </citation>
    <scope>IDENTIFICATION BY MASS SPECTROMETRY [LARGE SCALE ANALYSIS]</scope>
    <source>
        <tissue>Liver</tissue>
    </source>
</reference>
<reference key="24">
    <citation type="journal article" date="2016" name="J. Exp. Med.">
        <title>Otud7b facilitates T cell activation and inflammatory responses by regulating Zap70 ubiquitination.</title>
        <authorList>
            <person name="Hu H."/>
            <person name="Wang H."/>
            <person name="Xiao Y."/>
            <person name="Jin J."/>
            <person name="Chang J.H."/>
            <person name="Zou Q."/>
            <person name="Xie X."/>
            <person name="Cheng X."/>
            <person name="Sun S.C."/>
        </authorList>
    </citation>
    <scope>FUNCTION</scope>
    <scope>INTERACTION WITH ZAP70</scope>
    <scope>MUTAGENESIS OF CYS-194 AND HIS-358</scope>
    <scope>CATALYTIC ACTIVITY</scope>
</reference>
<reference key="25">
    <citation type="journal article" date="2017" name="Nature">
        <title>TRAF2 and OTUD7B govern a ubiquitin-dependent switch that regulates mTORC2 signalling.</title>
        <authorList>
            <person name="Wang B."/>
            <person name="Jie Z."/>
            <person name="Joo D."/>
            <person name="Ordureau A."/>
            <person name="Liu P."/>
            <person name="Gan W."/>
            <person name="Guo J."/>
            <person name="Zhang J."/>
            <person name="North B.J."/>
            <person name="Dai X."/>
            <person name="Cheng X."/>
            <person name="Bian X."/>
            <person name="Zhang L."/>
            <person name="Harper J.W."/>
            <person name="Sun S.C."/>
            <person name="Wei W."/>
        </authorList>
    </citation>
    <scope>FUNCTION</scope>
    <scope>CATALYTIC ACTIVITY</scope>
</reference>
<reference evidence="24 25 26" key="26">
    <citation type="journal article" date="2016" name="Nature">
        <title>Molecular basis of Lys11-polyubiquitin specificity in the deubiquitinase Cezanne.</title>
        <authorList>
            <person name="Mevissen T.E."/>
            <person name="Kulathu Y."/>
            <person name="Mulder M.P."/>
            <person name="Geurink P.P."/>
            <person name="Maslen S.L."/>
            <person name="Gersch M."/>
            <person name="Elliott P.R."/>
            <person name="Burke J.E."/>
            <person name="van Tol B.D."/>
            <person name="Akutsu M."/>
            <person name="El Oualid F."/>
            <person name="Kawasaki M."/>
            <person name="Freund S.M."/>
            <person name="Ovaa H."/>
            <person name="Komander D."/>
        </authorList>
    </citation>
    <scope>X-RAY CRYSTALLOGRAPHY (2.00 ANGSTROMS) OF 129-438 OF APOPROTEIN AND IN COMPLEXES WITH UBIQUITIN</scope>
    <scope>CATALYTIC ACTIVITY</scope>
    <scope>SUBSTRATE SPECIFICITY</scope>
    <scope>FUNCTION</scope>
    <scope>ACTIVE SITE</scope>
    <scope>DOMAIN</scope>
    <scope>MUTAGENESIS OF 155-LEU-ILE-156; GLU-157; ASN-193; CYS-194; HIS-197; ASP-210; GLU-295 AND HIS-358</scope>
</reference>
<proteinExistence type="evidence at protein level"/>
<evidence type="ECO:0000250" key="1"/>
<evidence type="ECO:0000250" key="2">
    <source>
        <dbReference type="UniProtKB" id="B2RUR8"/>
    </source>
</evidence>
<evidence type="ECO:0000255" key="3"/>
<evidence type="ECO:0000255" key="4">
    <source>
        <dbReference type="PROSITE-ProRule" id="PRU00139"/>
    </source>
</evidence>
<evidence type="ECO:0000255" key="5">
    <source>
        <dbReference type="PROSITE-ProRule" id="PRU00451"/>
    </source>
</evidence>
<evidence type="ECO:0000256" key="6">
    <source>
        <dbReference type="SAM" id="MobiDB-lite"/>
    </source>
</evidence>
<evidence type="ECO:0000269" key="7">
    <source>
    </source>
</evidence>
<evidence type="ECO:0000269" key="8">
    <source>
    </source>
</evidence>
<evidence type="ECO:0000269" key="9">
    <source>
    </source>
</evidence>
<evidence type="ECO:0000269" key="10">
    <source>
    </source>
</evidence>
<evidence type="ECO:0000269" key="11">
    <source>
    </source>
</evidence>
<evidence type="ECO:0000269" key="12">
    <source>
    </source>
</evidence>
<evidence type="ECO:0000269" key="13">
    <source>
    </source>
</evidence>
<evidence type="ECO:0000269" key="14">
    <source>
    </source>
</evidence>
<evidence type="ECO:0000269" key="15">
    <source>
    </source>
</evidence>
<evidence type="ECO:0000269" key="16">
    <source>
    </source>
</evidence>
<evidence type="ECO:0000269" key="17">
    <source>
    </source>
</evidence>
<evidence type="ECO:0000269" key="18">
    <source>
    </source>
</evidence>
<evidence type="ECO:0000303" key="19">
    <source>
    </source>
</evidence>
<evidence type="ECO:0000303" key="20">
    <source>
    </source>
</evidence>
<evidence type="ECO:0000303" key="21">
    <source>
    </source>
</evidence>
<evidence type="ECO:0000303" key="22">
    <source>
    </source>
</evidence>
<evidence type="ECO:0000305" key="23"/>
<evidence type="ECO:0007744" key="24">
    <source>
        <dbReference type="PDB" id="5LRU"/>
    </source>
</evidence>
<evidence type="ECO:0007744" key="25">
    <source>
        <dbReference type="PDB" id="5LRV"/>
    </source>
</evidence>
<evidence type="ECO:0007744" key="26">
    <source>
        <dbReference type="PDB" id="5LRW"/>
    </source>
</evidence>
<evidence type="ECO:0007744" key="27">
    <source>
    </source>
</evidence>
<evidence type="ECO:0007744" key="28">
    <source>
    </source>
</evidence>
<evidence type="ECO:0007744" key="29">
    <source>
    </source>
</evidence>
<evidence type="ECO:0007829" key="30">
    <source>
        <dbReference type="PDB" id="5LRU"/>
    </source>
</evidence>
<evidence type="ECO:0007829" key="31">
    <source>
        <dbReference type="PDB" id="5LRV"/>
    </source>
</evidence>
<evidence type="ECO:0007829" key="32">
    <source>
        <dbReference type="PDB" id="5LRW"/>
    </source>
</evidence>
<comment type="function">
    <text evidence="2 7 8 10 11 14 15 16 17 18">Negative regulator of the non-canonical NF-kappa-B pathway that acts by mediating deubiquitination of TRAF3, an inhibitor of the NF-kappa-B pathway, thereby acting as a negative regulator of B-cell responses (PubMed:18178551). In response to non-canonical NF-kappa-B stimuli, deubiquitinates 'Lys-48'-linked polyubiquitin chains of TRAF3, preventing TRAF3 proteolysis and over-activation of non-canonical NF-kappa-B (By similarity). Negatively regulates mucosal immunity against infections (By similarity). Deubiquitinates ZAP70, and thereby regulates T cell receptor (TCR) signaling that leads to the activation of NF-kappa-B (PubMed:26903241). Plays a role in T cell homeostasis and is required for normal T cell responses, including production of IFNG and IL2 (By similarity). Mediates deubiquitination of EGFR (PubMed:22179831). Has deubiquitinating activity toward 'Lys-11', 'Lys-48' and 'Lys-63'-linked polyubiquitin chains (PubMed:11463333, PubMed:20622874, PubMed:23827681, PubMed:27732584). Has a much higher catalytic rate with 'Lys-11'-linked polyubiquitin chains (in vitro); however the physiological significance of these data are unsure (PubMed:27732584). Hydrolyzes both linear and branched forms of polyubiquitin (PubMed:12682062). Acts as a regulator of mTORC1 and mTORC2 assembly by mediating 'Lys-63'-linked deubiquitination of MLST8, thereby promoting assembly of the mTORC2 complex, while inibiting formation of the mTORC1 complex (PubMed:28489822).</text>
</comment>
<comment type="catalytic activity">
    <reaction evidence="8 9 14 15 16 17 18">
        <text>Thiol-dependent hydrolysis of ester, thioester, amide, peptide and isopeptide bonds formed by the C-terminal Gly of ubiquitin (a 76-residue protein attached to proteins as an intracellular targeting signal).</text>
        <dbReference type="EC" id="3.4.19.12"/>
    </reaction>
</comment>
<comment type="activity regulation">
    <text evidence="12">Deubiquitinase activity is inhibited following interaction with PARK7.</text>
</comment>
<comment type="subunit">
    <text evidence="2 7 12 14 16">Interacts with ZAP70 in activated T cells, but not in resting T cells (PubMed:26903241). Interacts with TRAF3 (By similarity). Interacts with TRAF6 (PubMed:11463333). Interacts with PARK7, leading to inhibit deubiquitinase activity (PubMed:21097510). Interacts with EGFR, ITCH and NEDD4 (PubMed:22179831).</text>
</comment>
<comment type="interaction">
    <interactant intactId="EBI-527784">
        <id>Q6GQQ9</id>
    </interactant>
    <interactant intactId="EBI-723996">
        <id>Q8IVM0</id>
        <label>CCDC50</label>
    </interactant>
    <organismsDiffer>false</organismsDiffer>
    <experiments>5</experiments>
</comment>
<comment type="interaction">
    <interactant intactId="EBI-527784">
        <id>Q6GQQ9</id>
    </interactant>
    <interactant intactId="EBI-2876678">
        <id>Q9H305</id>
        <label>CDIP1</label>
    </interactant>
    <organismsDiffer>false</organismsDiffer>
    <experiments>3</experiments>
</comment>
<comment type="interaction">
    <interactant intactId="EBI-527784">
        <id>Q6GQQ9</id>
    </interactant>
    <interactant intactId="EBI-724310">
        <id>Q15038</id>
        <label>DAZAP2</label>
    </interactant>
    <organismsDiffer>false</organismsDiffer>
    <experiments>3</experiments>
</comment>
<comment type="interaction">
    <interactant intactId="EBI-527784">
        <id>Q6GQQ9</id>
    </interactant>
    <interactant intactId="EBI-6255981">
        <id>Q7L775</id>
        <label>EPM2AIP1</label>
    </interactant>
    <organismsDiffer>false</organismsDiffer>
    <experiments>3</experiments>
</comment>
<comment type="interaction">
    <interactant intactId="EBI-527784">
        <id>Q6GQQ9</id>
    </interactant>
    <interactant intactId="EBI-3957665">
        <id>Q96LI6</id>
        <label>HSFY2</label>
    </interactant>
    <organismsDiffer>false</organismsDiffer>
    <experiments>3</experiments>
</comment>
<comment type="interaction">
    <interactant intactId="EBI-527784">
        <id>Q6GQQ9</id>
    </interactant>
    <interactant intactId="EBI-750730">
        <id>Q96BN8</id>
        <label>OTULIN</label>
    </interactant>
    <organismsDiffer>false</organismsDiffer>
    <experiments>3</experiments>
</comment>
<comment type="interaction">
    <interactant intactId="EBI-527784">
        <id>Q6GQQ9</id>
    </interactant>
    <interactant intactId="EBI-1164361">
        <id>Q99497</id>
        <label>PARK7</label>
    </interactant>
    <organismsDiffer>false</organismsDiffer>
    <experiments>3</experiments>
</comment>
<comment type="interaction">
    <interactant intactId="EBI-527784">
        <id>Q6GQQ9</id>
    </interactant>
    <interactant intactId="EBI-79893">
        <id>Q92569</id>
        <label>PIK3R3</label>
    </interactant>
    <organismsDiffer>false</organismsDiffer>
    <experiments>3</experiments>
</comment>
<comment type="interaction">
    <interactant intactId="EBI-527784">
        <id>Q6GQQ9</id>
    </interactant>
    <interactant intactId="EBI-372273">
        <id>P20618</id>
        <label>PSMB1</label>
    </interactant>
    <organismsDiffer>false</organismsDiffer>
    <experiments>3</experiments>
</comment>
<comment type="interaction">
    <interactant intactId="EBI-527784">
        <id>Q6GQQ9</id>
    </interactant>
    <interactant intactId="EBI-12000762">
        <id>Q7Z5V6-2</id>
        <label>SAXO4</label>
    </interactant>
    <organismsDiffer>false</organismsDiffer>
    <experiments>3</experiments>
</comment>
<comment type="interaction">
    <interactant intactId="EBI-527784">
        <id>Q6GQQ9</id>
    </interactant>
    <interactant intactId="EBI-2643803">
        <id>Q8N0X7</id>
        <label>SPART</label>
    </interactant>
    <organismsDiffer>false</organismsDiffer>
    <experiments>3</experiments>
</comment>
<comment type="interaction">
    <interactant intactId="EBI-25830200">
        <id>Q6GQQ9-2</id>
    </interactant>
    <interactant intactId="EBI-640741">
        <id>P01023</id>
        <label>A2M</label>
    </interactant>
    <organismsDiffer>false</organismsDiffer>
    <experiments>3</experiments>
</comment>
<comment type="interaction">
    <interactant intactId="EBI-25830200">
        <id>Q6GQQ9-2</id>
    </interactant>
    <interactant intactId="EBI-25830928">
        <id>P02768-3</id>
        <label>ALB</label>
    </interactant>
    <organismsDiffer>false</organismsDiffer>
    <experiments>3</experiments>
</comment>
<comment type="interaction">
    <interactant intactId="EBI-25830200">
        <id>Q6GQQ9-2</id>
    </interactant>
    <interactant intactId="EBI-930964">
        <id>P54253</id>
        <label>ATXN1</label>
    </interactant>
    <organismsDiffer>false</organismsDiffer>
    <experiments>6</experiments>
</comment>
<comment type="interaction">
    <interactant intactId="EBI-25830200">
        <id>Q6GQQ9-2</id>
    </interactant>
    <interactant intactId="EBI-10988864">
        <id>P46379-2</id>
        <label>BAG6</label>
    </interactant>
    <organismsDiffer>false</organismsDiffer>
    <experiments>3</experiments>
</comment>
<comment type="interaction">
    <interactant intactId="EBI-25830200">
        <id>Q6GQQ9-2</id>
    </interactant>
    <interactant intactId="EBI-718729">
        <id>P55212</id>
        <label>CASP6</label>
    </interactant>
    <organismsDiffer>false</organismsDiffer>
    <experiments>3</experiments>
</comment>
<comment type="interaction">
    <interactant intactId="EBI-25830200">
        <id>Q6GQQ9-2</id>
    </interactant>
    <interactant intactId="EBI-8589586">
        <id>P09172</id>
        <label>DBH</label>
    </interactant>
    <organismsDiffer>false</organismsDiffer>
    <experiments>3</experiments>
</comment>
<comment type="interaction">
    <interactant intactId="EBI-25830200">
        <id>Q6GQQ9-2</id>
    </interactant>
    <interactant intactId="EBI-25840379">
        <id>Q14203-5</id>
        <label>DCTN1</label>
    </interactant>
    <organismsDiffer>false</organismsDiffer>
    <experiments>3</experiments>
</comment>
<comment type="interaction">
    <interactant intactId="EBI-25830200">
        <id>Q6GQQ9-2</id>
    </interactant>
    <interactant intactId="EBI-10976677">
        <id>G5E9A7</id>
        <label>DMWD</label>
    </interactant>
    <organismsDiffer>false</organismsDiffer>
    <experiments>3</experiments>
</comment>
<comment type="interaction">
    <interactant intactId="EBI-25830200">
        <id>Q6GQQ9-2</id>
    </interactant>
    <interactant intactId="EBI-395638">
        <id>O14645</id>
        <label>DNALI1</label>
    </interactant>
    <organismsDiffer>false</organismsDiffer>
    <experiments>3</experiments>
</comment>
<comment type="interaction">
    <interactant intactId="EBI-25830200">
        <id>Q6GQQ9-2</id>
    </interactant>
    <interactant intactId="EBI-1054228">
        <id>P41091</id>
        <label>EIF2S3</label>
    </interactant>
    <organismsDiffer>false</organismsDiffer>
    <experiments>3</experiments>
</comment>
<comment type="interaction">
    <interactant intactId="EBI-25830200">
        <id>Q6GQQ9-2</id>
    </interactant>
    <interactant intactId="EBI-25852368">
        <id>O75460-2</id>
        <label>ERN1</label>
    </interactant>
    <organismsDiffer>false</organismsDiffer>
    <experiments>3</experiments>
</comment>
<comment type="interaction">
    <interactant intactId="EBI-25830200">
        <id>Q6GQQ9-2</id>
    </interactant>
    <interactant intactId="EBI-348399">
        <id>P22607</id>
        <label>FGFR3</label>
    </interactant>
    <organismsDiffer>false</organismsDiffer>
    <experiments>3</experiments>
</comment>
<comment type="interaction">
    <interactant intactId="EBI-25830200">
        <id>Q6GQQ9-2</id>
    </interactant>
    <interactant intactId="EBI-10226858">
        <id>Q0VDC6</id>
        <label>FKBP1A</label>
    </interactant>
    <organismsDiffer>false</organismsDiffer>
    <experiments>3</experiments>
</comment>
<comment type="interaction">
    <interactant intactId="EBI-25830200">
        <id>Q6GQQ9-2</id>
    </interactant>
    <interactant intactId="EBI-744302">
        <id>P14136</id>
        <label>GFAP</label>
    </interactant>
    <organismsDiffer>false</organismsDiffer>
    <experiments>3</experiments>
</comment>
<comment type="interaction">
    <interactant intactId="EBI-25830200">
        <id>Q6GQQ9-2</id>
    </interactant>
    <interactant intactId="EBI-8285963">
        <id>Q14957</id>
        <label>GRIN2C</label>
    </interactant>
    <organismsDiffer>false</organismsDiffer>
    <experiments>3</experiments>
</comment>
<comment type="interaction">
    <interactant intactId="EBI-25830200">
        <id>Q6GQQ9-2</id>
    </interactant>
    <interactant intactId="EBI-351506">
        <id>P06396</id>
        <label>GSN</label>
    </interactant>
    <organismsDiffer>false</organismsDiffer>
    <experiments>3</experiments>
</comment>
<comment type="interaction">
    <interactant intactId="EBI-25830200">
        <id>Q6GQQ9-2</id>
    </interactant>
    <interactant intactId="EBI-356991">
        <id>P54652</id>
        <label>HSPA2</label>
    </interactant>
    <organismsDiffer>false</organismsDiffer>
    <experiments>3</experiments>
</comment>
<comment type="interaction">
    <interactant intactId="EBI-25830200">
        <id>Q6GQQ9-2</id>
    </interactant>
    <interactant intactId="EBI-352682">
        <id>P04792</id>
        <label>HSPB1</label>
    </interactant>
    <organismsDiffer>false</organismsDiffer>
    <experiments>3</experiments>
</comment>
<comment type="interaction">
    <interactant intactId="EBI-25830200">
        <id>Q6GQQ9-2</id>
    </interactant>
    <interactant intactId="EBI-517086">
        <id>O43464</id>
        <label>HTRA2</label>
    </interactant>
    <organismsDiffer>false</organismsDiffer>
    <experiments>3</experiments>
</comment>
<comment type="interaction">
    <interactant intactId="EBI-25830200">
        <id>Q6GQQ9-2</id>
    </interactant>
    <interactant intactId="EBI-1055254">
        <id>Q8WXH2</id>
        <label>JPH3</label>
    </interactant>
    <organismsDiffer>false</organismsDiffer>
    <experiments>3</experiments>
</comment>
<comment type="interaction">
    <interactant intactId="EBI-25830200">
        <id>Q6GQQ9-2</id>
    </interactant>
    <interactant intactId="EBI-10975473">
        <id>O60333-2</id>
        <label>KIF1B</label>
    </interactant>
    <organismsDiffer>false</organismsDiffer>
    <experiments>3</experiments>
</comment>
<comment type="interaction">
    <interactant intactId="EBI-25830200">
        <id>Q6GQQ9-2</id>
    </interactant>
    <interactant intactId="EBI-948266">
        <id>O14901</id>
        <label>KLF11</label>
    </interactant>
    <organismsDiffer>false</organismsDiffer>
    <experiments>3</experiments>
</comment>
<comment type="interaction">
    <interactant intactId="EBI-25830200">
        <id>Q6GQQ9-2</id>
    </interactant>
    <interactant intactId="EBI-21591415">
        <id>P13473-2</id>
        <label>LAMP2</label>
    </interactant>
    <organismsDiffer>false</organismsDiffer>
    <experiments>3</experiments>
</comment>
<comment type="interaction">
    <interactant intactId="EBI-25830200">
        <id>Q6GQQ9-2</id>
    </interactant>
    <interactant intactId="EBI-73995">
        <id>P27361</id>
        <label>MAPK3</label>
    </interactant>
    <organismsDiffer>false</organismsDiffer>
    <experiments>3</experiments>
</comment>
<comment type="interaction">
    <interactant intactId="EBI-25830200">
        <id>Q6GQQ9-2</id>
    </interactant>
    <interactant intactId="EBI-1189067">
        <id>P51608</id>
        <label>MECP2</label>
    </interactant>
    <organismsDiffer>false</organismsDiffer>
    <experiments>3</experiments>
</comment>
<comment type="interaction">
    <interactant intactId="EBI-25830200">
        <id>Q6GQQ9-2</id>
    </interactant>
    <interactant intactId="EBI-713665">
        <id>P19404</id>
        <label>NDUFV2</label>
    </interactant>
    <organismsDiffer>false</organismsDiffer>
    <experiments>3</experiments>
</comment>
<comment type="interaction">
    <interactant intactId="EBI-25830200">
        <id>Q6GQQ9-2</id>
    </interactant>
    <interactant intactId="EBI-1014514">
        <id>P35240-4</id>
        <label>NF2</label>
    </interactant>
    <organismsDiffer>false</organismsDiffer>
    <experiments>3</experiments>
</comment>
<comment type="interaction">
    <interactant intactId="EBI-25830200">
        <id>Q6GQQ9-2</id>
    </interactant>
    <interactant intactId="EBI-2811583">
        <id>Q9BVL2</id>
        <label>NUP58</label>
    </interactant>
    <organismsDiffer>false</organismsDiffer>
    <experiments>3</experiments>
</comment>
<comment type="interaction">
    <interactant intactId="EBI-25830200">
        <id>Q6GQQ9-2</id>
    </interactant>
    <interactant intactId="EBI-721853">
        <id>O14832</id>
        <label>PHYH</label>
    </interactant>
    <organismsDiffer>false</organismsDiffer>
    <experiments>3</experiments>
</comment>
<comment type="interaction">
    <interactant intactId="EBI-25830200">
        <id>Q6GQQ9-2</id>
    </interactant>
    <interactant intactId="EBI-50433196">
        <id>A0A6Q8PF08</id>
        <label>PMP22</label>
    </interactant>
    <organismsDiffer>false</organismsDiffer>
    <experiments>3</experiments>
</comment>
<comment type="interaction">
    <interactant intactId="EBI-25830200">
        <id>Q6GQQ9-2</id>
    </interactant>
    <interactant intactId="EBI-21251460">
        <id>O60260-5</id>
        <label>PRKN</label>
    </interactant>
    <organismsDiffer>false</organismsDiffer>
    <experiments>3</experiments>
</comment>
<comment type="interaction">
    <interactant intactId="EBI-25830200">
        <id>Q6GQQ9-2</id>
    </interactant>
    <interactant intactId="EBI-5280197">
        <id>O75400-2</id>
        <label>PRPF40A</label>
    </interactant>
    <organismsDiffer>false</organismsDiffer>
    <experiments>3</experiments>
</comment>
<comment type="interaction">
    <interactant intactId="EBI-25830200">
        <id>Q6GQQ9-2</id>
    </interactant>
    <interactant intactId="EBI-749195">
        <id>P60891</id>
        <label>PRPS1</label>
    </interactant>
    <organismsDiffer>false</organismsDiffer>
    <experiments>3</experiments>
</comment>
<comment type="interaction">
    <interactant intactId="EBI-25830200">
        <id>Q6GQQ9-2</id>
    </interactant>
    <interactant intactId="EBI-286642">
        <id>P62826</id>
        <label>RAN</label>
    </interactant>
    <organismsDiffer>false</organismsDiffer>
    <experiments>3</experiments>
</comment>
<comment type="interaction">
    <interactant intactId="EBI-25830200">
        <id>Q6GQQ9-2</id>
    </interactant>
    <interactant intactId="EBI-396669">
        <id>Q9Y3C5</id>
        <label>RNF11</label>
    </interactant>
    <organismsDiffer>false</organismsDiffer>
    <experiments>3</experiments>
</comment>
<comment type="interaction">
    <interactant intactId="EBI-25830200">
        <id>Q6GQQ9-2</id>
    </interactant>
    <interactant intactId="EBI-985879">
        <id>P37840</id>
        <label>SNCA</label>
    </interactant>
    <organismsDiffer>false</organismsDiffer>
    <experiments>3</experiments>
</comment>
<comment type="interaction">
    <interactant intactId="EBI-25830200">
        <id>Q6GQQ9-2</id>
    </interactant>
    <interactant intactId="EBI-990792">
        <id>P00441</id>
        <label>SOD1</label>
    </interactant>
    <organismsDiffer>false</organismsDiffer>
    <experiments>3</experiments>
</comment>
<comment type="interaction">
    <interactant intactId="EBI-25830200">
        <id>Q6GQQ9-2</id>
    </interactant>
    <interactant intactId="EBI-5235340">
        <id>Q7Z699</id>
        <label>SPRED1</label>
    </interactant>
    <organismsDiffer>false</organismsDiffer>
    <experiments>3</experiments>
</comment>
<comment type="interaction">
    <interactant intactId="EBI-25830200">
        <id>Q6GQQ9-2</id>
    </interactant>
    <interactant intactId="EBI-372899">
        <id>Q13148</id>
        <label>TARDBP</label>
    </interactant>
    <organismsDiffer>false</organismsDiffer>
    <experiments>6</experiments>
</comment>
<comment type="interaction">
    <interactant intactId="EBI-25830200">
        <id>Q6GQQ9-2</id>
    </interactant>
    <interactant intactId="EBI-12806590">
        <id>Q86WV8</id>
        <label>TSC1</label>
    </interactant>
    <organismsDiffer>false</organismsDiffer>
    <experiments>3</experiments>
</comment>
<comment type="interaction">
    <interactant intactId="EBI-25830200">
        <id>Q6GQQ9-2</id>
    </interactant>
    <interactant intactId="EBI-711909">
        <id>P02766</id>
        <label>TTR</label>
    </interactant>
    <organismsDiffer>false</organismsDiffer>
    <experiments>3</experiments>
</comment>
<comment type="interaction">
    <interactant intactId="EBI-25830200">
        <id>Q6GQQ9-2</id>
    </interactant>
    <interactant intactId="EBI-413034">
        <id>P0CG47</id>
        <label>UBB</label>
    </interactant>
    <organismsDiffer>false</organismsDiffer>
    <experiments>3</experiments>
</comment>
<comment type="interaction">
    <interactant intactId="EBI-25830200">
        <id>Q6GQQ9-2</id>
    </interactant>
    <interactant intactId="EBI-741480">
        <id>Q9UMX0</id>
        <label>UBQLN1</label>
    </interactant>
    <organismsDiffer>false</organismsDiffer>
    <experiments>3</experiments>
</comment>
<comment type="interaction">
    <interactant intactId="EBI-25830200">
        <id>Q6GQQ9-2</id>
    </interactant>
    <interactant intactId="EBI-720609">
        <id>O76024</id>
        <label>WFS1</label>
    </interactant>
    <organismsDiffer>false</organismsDiffer>
    <experiments>3</experiments>
</comment>
<comment type="interaction">
    <interactant intactId="EBI-25830200">
        <id>Q6GQQ9-2</id>
    </interactant>
    <interactant intactId="EBI-25900580">
        <id>Q9Y649</id>
    </interactant>
    <organismsDiffer>false</organismsDiffer>
    <experiments>3</experiments>
</comment>
<comment type="subcellular location">
    <subcellularLocation>
        <location evidence="7 13">Cytoplasm</location>
    </subcellularLocation>
    <subcellularLocation>
        <location evidence="13">Nucleus</location>
    </subcellularLocation>
    <text evidence="13">Shuttles be cytoplasm and the nucleus in a XPO1/CRM1-dependent manner.</text>
</comment>
<comment type="alternative products">
    <event type="alternative splicing"/>
    <isoform>
        <id>Q6GQQ9-1</id>
        <name>1</name>
        <sequence type="displayed"/>
    </isoform>
    <isoform>
        <id>Q6GQQ9-2</id>
        <name>2</name>
        <sequence type="described" ref="VSP_046015"/>
    </isoform>
</comment>
<comment type="tissue specificity">
    <text evidence="7 8">Widely expressed. Abundant in kidney, heart and fetal liver. Expressed differentially among B-cells at distinct developmental stages. Higher expression seen in primary immature B-cells as compared to the mature cells.</text>
</comment>
<comment type="induction">
    <text evidence="10">By TNF-alpha.</text>
</comment>
<comment type="domain">
    <text evidence="17">The protein undergoes a significant conformation change upon binding to ubiquitinated substrates. The loop that precedes the active site is in an autoinhibitory conformation in the apoprotein. Ubiquitin binding leads to a conformation change; the loop is stabilized in a catalytically competent conformation with the result that the active site Cys can form the reaction state intermediate.</text>
</comment>
<comment type="PTM">
    <text evidence="14">Phosphorylated by EGFR.</text>
</comment>
<comment type="similarity">
    <text evidence="23">Belongs to the peptidase C64 family.</text>
</comment>
<comment type="sequence caution" evidence="23">
    <conflict type="erroneous initiation">
        <sequence resource="EMBL-CDS" id="CAB97494"/>
    </conflict>
    <text>Extended N-terminus.</text>
</comment>
<accession>Q6GQQ9</accession>
<accession>B7Z643</accession>
<accession>D3DUZ8</accession>
<accession>Q5SZ60</accession>
<accession>Q8WWA7</accession>
<accession>Q9NQ53</accession>
<accession>Q9UFF4</accession>
<organism>
    <name type="scientific">Homo sapiens</name>
    <name type="common">Human</name>
    <dbReference type="NCBI Taxonomy" id="9606"/>
    <lineage>
        <taxon>Eukaryota</taxon>
        <taxon>Metazoa</taxon>
        <taxon>Chordata</taxon>
        <taxon>Craniata</taxon>
        <taxon>Vertebrata</taxon>
        <taxon>Euteleostomi</taxon>
        <taxon>Mammalia</taxon>
        <taxon>Eutheria</taxon>
        <taxon>Euarchontoglires</taxon>
        <taxon>Primates</taxon>
        <taxon>Haplorrhini</taxon>
        <taxon>Catarrhini</taxon>
        <taxon>Hominidae</taxon>
        <taxon>Homo</taxon>
    </lineage>
</organism>